<organism>
    <name type="scientific">Homo sapiens</name>
    <name type="common">Human</name>
    <dbReference type="NCBI Taxonomy" id="9606"/>
    <lineage>
        <taxon>Eukaryota</taxon>
        <taxon>Metazoa</taxon>
        <taxon>Chordata</taxon>
        <taxon>Craniata</taxon>
        <taxon>Vertebrata</taxon>
        <taxon>Euteleostomi</taxon>
        <taxon>Mammalia</taxon>
        <taxon>Eutheria</taxon>
        <taxon>Euarchontoglires</taxon>
        <taxon>Primates</taxon>
        <taxon>Haplorrhini</taxon>
        <taxon>Catarrhini</taxon>
        <taxon>Hominidae</taxon>
        <taxon>Homo</taxon>
    </lineage>
</organism>
<feature type="chain" id="PRO_0000119844" description="F-box/LRR-repeat protein 4">
    <location>
        <begin position="1"/>
        <end position="621"/>
    </location>
</feature>
<feature type="domain" description="F-box" evidence="2">
    <location>
        <begin position="277"/>
        <end position="332"/>
    </location>
</feature>
<feature type="repeat" description="LRR 1">
    <location>
        <begin position="376"/>
        <end position="397"/>
    </location>
</feature>
<feature type="repeat" description="LRR 2">
    <location>
        <begin position="402"/>
        <end position="421"/>
    </location>
</feature>
<feature type="repeat" description="LRR 3">
    <location>
        <begin position="427"/>
        <end position="448"/>
    </location>
</feature>
<feature type="repeat" description="LRR 4">
    <location>
        <begin position="452"/>
        <end position="474"/>
    </location>
</feature>
<feature type="repeat" description="LRR 5">
    <location>
        <begin position="480"/>
        <end position="501"/>
    </location>
</feature>
<feature type="repeat" description="LRR 6">
    <location>
        <begin position="504"/>
        <end position="524"/>
    </location>
</feature>
<feature type="repeat" description="LRR 7">
    <location>
        <begin position="532"/>
        <end position="558"/>
    </location>
</feature>
<feature type="repeat" description="LRR 8">
    <location>
        <begin position="559"/>
        <end position="583"/>
    </location>
</feature>
<feature type="repeat" description="LRR 9">
    <location>
        <begin position="584"/>
        <end position="609"/>
    </location>
</feature>
<feature type="modified residue" description="Asymmetric dimethylarginine" evidence="1">
    <location>
        <position position="28"/>
    </location>
</feature>
<feature type="sequence variant" id="VAR_070858" description="In MTDPS13; dbSNP:rs1350566881." evidence="5">
    <original>I</original>
    <variation>T</variation>
    <location>
        <position position="205"/>
    </location>
</feature>
<feature type="sequence variant" id="VAR_076547" description="In MTDPS13; dbSNP:rs772037717." evidence="6">
    <original>L</original>
    <variation>P</variation>
    <location>
        <position position="481"/>
    </location>
</feature>
<feature type="sequence variant" id="VAR_070859" description="In MTDPS13; dbSNP:rs398123061." evidence="5">
    <original>R</original>
    <variation>W</variation>
    <location>
        <position position="482"/>
    </location>
</feature>
<feature type="sequence variant" id="VAR_070860" description="In MTDPS13; dbSNP:rs1554215979." evidence="5">
    <original>I</original>
    <variation>N</variation>
    <location>
        <position position="551"/>
    </location>
</feature>
<feature type="sequence variant" id="VAR_070861" description="In MTDPS13; dbSNP:rs398123062." evidence="5">
    <original>D</original>
    <variation>G</variation>
    <location>
        <position position="565"/>
    </location>
</feature>
<feature type="sequence variant" id="VAR_070862" description="In MTDPS13; dbSNP:rs398123060." evidence="5">
    <original>G</original>
    <variation>A</variation>
    <location>
        <position position="568"/>
    </location>
</feature>
<feature type="sequence variant" id="VAR_070863" description="In MTDPS13; dbSNP:rs201989042." evidence="5">
    <original>Q</original>
    <variation>P</variation>
    <location>
        <position position="597"/>
    </location>
</feature>
<feature type="sequence conflict" description="In Ref. 1; AAF03699." evidence="9" ref="1">
    <original>F</original>
    <variation>Y</variation>
    <location>
        <position position="5"/>
    </location>
</feature>
<feature type="sequence conflict" description="In Ref. 3; AAF09247." evidence="9" ref="3">
    <original>S</original>
    <variation>G</variation>
    <location>
        <position position="42"/>
    </location>
</feature>
<feature type="sequence conflict" description="In Ref. 1; AAF03699." evidence="9" ref="1">
    <original>Q</original>
    <variation>K</variation>
    <location>
        <position position="122"/>
    </location>
</feature>
<feature type="sequence conflict" description="In Ref. 1; AAF03699." evidence="9" ref="1">
    <original>Y</original>
    <variation>I</variation>
    <location>
        <position position="126"/>
    </location>
</feature>
<feature type="sequence conflict" description="In Ref. 1; AAF03699." evidence="9" ref="1">
    <original>E</original>
    <variation>G</variation>
    <location>
        <position position="219"/>
    </location>
</feature>
<feature type="sequence conflict" description="In Ref. 1; AAF03699." evidence="9" ref="1">
    <original>P</original>
    <variation>A</variation>
    <location>
        <position position="232"/>
    </location>
</feature>
<feature type="sequence conflict" description="In Ref. 4; BAG35902." evidence="9" ref="4">
    <original>P</original>
    <variation>L</variation>
    <location>
        <position position="533"/>
    </location>
</feature>
<name>FBXL4_HUMAN</name>
<sequence>MSPVFPMLTVLTMFYYICLRRRARTATRGEMMNTHRAIESNSQTSPLNAEVVQYAKEVVDFSSHYGSENSMSYTMWNLAGVPNVFPSSGDFTQTAVFRTYGTWWDQCPSASLPFKRTPPNFQSQDYVELTFEQQVYPTAVHVLETYHPGAVIRILACSANPYSPNPPAEVRWEILWSERPTKVNASQARQFKPCIKQINFPTNLIRLEVNSSLLEYYTELDAVVLHGVKDKPVLSLKTSLIDMNDIEDDAYAEKDGCGMDSLNKKFSSAVLGEGPNNGYFDKLPYELIQLILNHLTLPDLCRLAQTCKLLSQHCCDPLQYIHLNLQPYWAKLDDTSLEFLQSRCTLVQWLNLSWTGNRGFISVAGFSRFLKVCGSELVRLELSCSHFLNETCLEVISEMCPNLQALNLSSCDKLPPQAFNHIAKLCSLKRLVLYRTKVEQTALLSILNFCSELQHLSLGSCVMIEDYDVIASMIGAKCKKLRTLDLWRCKNITENGIAELASGCPLLEELDLGWCPTLQSSTGCFTRLAHQLPNLQKLFLTANRSVCDTDIDELACNCTRLQQLDILGTRMVSPASLRKLLESCKDLSLLDVSFCSQIDNRAVLELNASFPKVFIKKSFTQ</sequence>
<reference key="1">
    <citation type="journal article" date="1999" name="Curr. Biol.">
        <title>A family of mammalian F-box proteins.</title>
        <authorList>
            <person name="Winston J.T."/>
            <person name="Koepp D.M."/>
            <person name="Zhu C."/>
            <person name="Elledge S.J."/>
            <person name="Harper J.W."/>
        </authorList>
    </citation>
    <scope>NUCLEOTIDE SEQUENCE [MRNA]</scope>
    <scope>TISSUE SPECIFICITY</scope>
    <scope>SUBCELLULAR LOCATION</scope>
</reference>
<reference key="2">
    <citation type="journal article" date="1999" name="Curr. Biol.">
        <title>Identification of a family of human F-box proteins.</title>
        <authorList>
            <person name="Cenciarelli C."/>
            <person name="Chiaur D.S."/>
            <person name="Guardavaccaro D."/>
            <person name="Parks W."/>
            <person name="Vidal M."/>
            <person name="Pagano M."/>
        </authorList>
    </citation>
    <scope>NUCLEOTIDE SEQUENCE [MRNA]</scope>
</reference>
<reference key="3">
    <citation type="journal article" date="2000" name="Genomics">
        <title>cDNA cloning and expression analysis of new members of the mammalian F-box protein family.</title>
        <authorList>
            <person name="Ilyin G.P."/>
            <person name="Rialland M."/>
            <person name="Pigeon C."/>
            <person name="Guguen-Guillouzo C."/>
        </authorList>
    </citation>
    <scope>NUCLEOTIDE SEQUENCE [MRNA]</scope>
</reference>
<reference key="4">
    <citation type="journal article" date="2004" name="Nat. Genet.">
        <title>Complete sequencing and characterization of 21,243 full-length human cDNAs.</title>
        <authorList>
            <person name="Ota T."/>
            <person name="Suzuki Y."/>
            <person name="Nishikawa T."/>
            <person name="Otsuki T."/>
            <person name="Sugiyama T."/>
            <person name="Irie R."/>
            <person name="Wakamatsu A."/>
            <person name="Hayashi K."/>
            <person name="Sato H."/>
            <person name="Nagai K."/>
            <person name="Kimura K."/>
            <person name="Makita H."/>
            <person name="Sekine M."/>
            <person name="Obayashi M."/>
            <person name="Nishi T."/>
            <person name="Shibahara T."/>
            <person name="Tanaka T."/>
            <person name="Ishii S."/>
            <person name="Yamamoto J."/>
            <person name="Saito K."/>
            <person name="Kawai Y."/>
            <person name="Isono Y."/>
            <person name="Nakamura Y."/>
            <person name="Nagahari K."/>
            <person name="Murakami K."/>
            <person name="Yasuda T."/>
            <person name="Iwayanagi T."/>
            <person name="Wagatsuma M."/>
            <person name="Shiratori A."/>
            <person name="Sudo H."/>
            <person name="Hosoiri T."/>
            <person name="Kaku Y."/>
            <person name="Kodaira H."/>
            <person name="Kondo H."/>
            <person name="Sugawara M."/>
            <person name="Takahashi M."/>
            <person name="Kanda K."/>
            <person name="Yokoi T."/>
            <person name="Furuya T."/>
            <person name="Kikkawa E."/>
            <person name="Omura Y."/>
            <person name="Abe K."/>
            <person name="Kamihara K."/>
            <person name="Katsuta N."/>
            <person name="Sato K."/>
            <person name="Tanikawa M."/>
            <person name="Yamazaki M."/>
            <person name="Ninomiya K."/>
            <person name="Ishibashi T."/>
            <person name="Yamashita H."/>
            <person name="Murakawa K."/>
            <person name="Fujimori K."/>
            <person name="Tanai H."/>
            <person name="Kimata M."/>
            <person name="Watanabe M."/>
            <person name="Hiraoka S."/>
            <person name="Chiba Y."/>
            <person name="Ishida S."/>
            <person name="Ono Y."/>
            <person name="Takiguchi S."/>
            <person name="Watanabe S."/>
            <person name="Yosida M."/>
            <person name="Hotuta T."/>
            <person name="Kusano J."/>
            <person name="Kanehori K."/>
            <person name="Takahashi-Fujii A."/>
            <person name="Hara H."/>
            <person name="Tanase T.-O."/>
            <person name="Nomura Y."/>
            <person name="Togiya S."/>
            <person name="Komai F."/>
            <person name="Hara R."/>
            <person name="Takeuchi K."/>
            <person name="Arita M."/>
            <person name="Imose N."/>
            <person name="Musashino K."/>
            <person name="Yuuki H."/>
            <person name="Oshima A."/>
            <person name="Sasaki N."/>
            <person name="Aotsuka S."/>
            <person name="Yoshikawa Y."/>
            <person name="Matsunawa H."/>
            <person name="Ichihara T."/>
            <person name="Shiohata N."/>
            <person name="Sano S."/>
            <person name="Moriya S."/>
            <person name="Momiyama H."/>
            <person name="Satoh N."/>
            <person name="Takami S."/>
            <person name="Terashima Y."/>
            <person name="Suzuki O."/>
            <person name="Nakagawa S."/>
            <person name="Senoh A."/>
            <person name="Mizoguchi H."/>
            <person name="Goto Y."/>
            <person name="Shimizu F."/>
            <person name="Wakebe H."/>
            <person name="Hishigaki H."/>
            <person name="Watanabe T."/>
            <person name="Sugiyama A."/>
            <person name="Takemoto M."/>
            <person name="Kawakami B."/>
            <person name="Yamazaki M."/>
            <person name="Watanabe K."/>
            <person name="Kumagai A."/>
            <person name="Itakura S."/>
            <person name="Fukuzumi Y."/>
            <person name="Fujimori Y."/>
            <person name="Komiyama M."/>
            <person name="Tashiro H."/>
            <person name="Tanigami A."/>
            <person name="Fujiwara T."/>
            <person name="Ono T."/>
            <person name="Yamada K."/>
            <person name="Fujii Y."/>
            <person name="Ozaki K."/>
            <person name="Hirao M."/>
            <person name="Ohmori Y."/>
            <person name="Kawabata A."/>
            <person name="Hikiji T."/>
            <person name="Kobatake N."/>
            <person name="Inagaki H."/>
            <person name="Ikema Y."/>
            <person name="Okamoto S."/>
            <person name="Okitani R."/>
            <person name="Kawakami T."/>
            <person name="Noguchi S."/>
            <person name="Itoh T."/>
            <person name="Shigeta K."/>
            <person name="Senba T."/>
            <person name="Matsumura K."/>
            <person name="Nakajima Y."/>
            <person name="Mizuno T."/>
            <person name="Morinaga M."/>
            <person name="Sasaki M."/>
            <person name="Togashi T."/>
            <person name="Oyama M."/>
            <person name="Hata H."/>
            <person name="Watanabe M."/>
            <person name="Komatsu T."/>
            <person name="Mizushima-Sugano J."/>
            <person name="Satoh T."/>
            <person name="Shirai Y."/>
            <person name="Takahashi Y."/>
            <person name="Nakagawa K."/>
            <person name="Okumura K."/>
            <person name="Nagase T."/>
            <person name="Nomura N."/>
            <person name="Kikuchi H."/>
            <person name="Masuho Y."/>
            <person name="Yamashita R."/>
            <person name="Nakai K."/>
            <person name="Yada T."/>
            <person name="Nakamura Y."/>
            <person name="Ohara O."/>
            <person name="Isogai T."/>
            <person name="Sugano S."/>
        </authorList>
    </citation>
    <scope>NUCLEOTIDE SEQUENCE [LARGE SCALE MRNA]</scope>
    <source>
        <tissue>Hippocampus</tissue>
    </source>
</reference>
<reference key="5">
    <citation type="journal article" date="2003" name="Nature">
        <title>The DNA sequence and analysis of human chromosome 6.</title>
        <authorList>
            <person name="Mungall A.J."/>
            <person name="Palmer S.A."/>
            <person name="Sims S.K."/>
            <person name="Edwards C.A."/>
            <person name="Ashurst J.L."/>
            <person name="Wilming L."/>
            <person name="Jones M.C."/>
            <person name="Horton R."/>
            <person name="Hunt S.E."/>
            <person name="Scott C.E."/>
            <person name="Gilbert J.G.R."/>
            <person name="Clamp M.E."/>
            <person name="Bethel G."/>
            <person name="Milne S."/>
            <person name="Ainscough R."/>
            <person name="Almeida J.P."/>
            <person name="Ambrose K.D."/>
            <person name="Andrews T.D."/>
            <person name="Ashwell R.I.S."/>
            <person name="Babbage A.K."/>
            <person name="Bagguley C.L."/>
            <person name="Bailey J."/>
            <person name="Banerjee R."/>
            <person name="Barker D.J."/>
            <person name="Barlow K.F."/>
            <person name="Bates K."/>
            <person name="Beare D.M."/>
            <person name="Beasley H."/>
            <person name="Beasley O."/>
            <person name="Bird C.P."/>
            <person name="Blakey S.E."/>
            <person name="Bray-Allen S."/>
            <person name="Brook J."/>
            <person name="Brown A.J."/>
            <person name="Brown J.Y."/>
            <person name="Burford D.C."/>
            <person name="Burrill W."/>
            <person name="Burton J."/>
            <person name="Carder C."/>
            <person name="Carter N.P."/>
            <person name="Chapman J.C."/>
            <person name="Clark S.Y."/>
            <person name="Clark G."/>
            <person name="Clee C.M."/>
            <person name="Clegg S."/>
            <person name="Cobley V."/>
            <person name="Collier R.E."/>
            <person name="Collins J.E."/>
            <person name="Colman L.K."/>
            <person name="Corby N.R."/>
            <person name="Coville G.J."/>
            <person name="Culley K.M."/>
            <person name="Dhami P."/>
            <person name="Davies J."/>
            <person name="Dunn M."/>
            <person name="Earthrowl M.E."/>
            <person name="Ellington A.E."/>
            <person name="Evans K.A."/>
            <person name="Faulkner L."/>
            <person name="Francis M.D."/>
            <person name="Frankish A."/>
            <person name="Frankland J."/>
            <person name="French L."/>
            <person name="Garner P."/>
            <person name="Garnett J."/>
            <person name="Ghori M.J."/>
            <person name="Gilby L.M."/>
            <person name="Gillson C.J."/>
            <person name="Glithero R.J."/>
            <person name="Grafham D.V."/>
            <person name="Grant M."/>
            <person name="Gribble S."/>
            <person name="Griffiths C."/>
            <person name="Griffiths M.N.D."/>
            <person name="Hall R."/>
            <person name="Halls K.S."/>
            <person name="Hammond S."/>
            <person name="Harley J.L."/>
            <person name="Hart E.A."/>
            <person name="Heath P.D."/>
            <person name="Heathcott R."/>
            <person name="Holmes S.J."/>
            <person name="Howden P.J."/>
            <person name="Howe K.L."/>
            <person name="Howell G.R."/>
            <person name="Huckle E."/>
            <person name="Humphray S.J."/>
            <person name="Humphries M.D."/>
            <person name="Hunt A.R."/>
            <person name="Johnson C.M."/>
            <person name="Joy A.A."/>
            <person name="Kay M."/>
            <person name="Keenan S.J."/>
            <person name="Kimberley A.M."/>
            <person name="King A."/>
            <person name="Laird G.K."/>
            <person name="Langford C."/>
            <person name="Lawlor S."/>
            <person name="Leongamornlert D.A."/>
            <person name="Leversha M."/>
            <person name="Lloyd C.R."/>
            <person name="Lloyd D.M."/>
            <person name="Loveland J.E."/>
            <person name="Lovell J."/>
            <person name="Martin S."/>
            <person name="Mashreghi-Mohammadi M."/>
            <person name="Maslen G.L."/>
            <person name="Matthews L."/>
            <person name="McCann O.T."/>
            <person name="McLaren S.J."/>
            <person name="McLay K."/>
            <person name="McMurray A."/>
            <person name="Moore M.J.F."/>
            <person name="Mullikin J.C."/>
            <person name="Niblett D."/>
            <person name="Nickerson T."/>
            <person name="Novik K.L."/>
            <person name="Oliver K."/>
            <person name="Overton-Larty E.K."/>
            <person name="Parker A."/>
            <person name="Patel R."/>
            <person name="Pearce A.V."/>
            <person name="Peck A.I."/>
            <person name="Phillimore B.J.C.T."/>
            <person name="Phillips S."/>
            <person name="Plumb R.W."/>
            <person name="Porter K.M."/>
            <person name="Ramsey Y."/>
            <person name="Ranby S.A."/>
            <person name="Rice C.M."/>
            <person name="Ross M.T."/>
            <person name="Searle S.M."/>
            <person name="Sehra H.K."/>
            <person name="Sheridan E."/>
            <person name="Skuce C.D."/>
            <person name="Smith S."/>
            <person name="Smith M."/>
            <person name="Spraggon L."/>
            <person name="Squares S.L."/>
            <person name="Steward C.A."/>
            <person name="Sycamore N."/>
            <person name="Tamlyn-Hall G."/>
            <person name="Tester J."/>
            <person name="Theaker A.J."/>
            <person name="Thomas D.W."/>
            <person name="Thorpe A."/>
            <person name="Tracey A."/>
            <person name="Tromans A."/>
            <person name="Tubby B."/>
            <person name="Wall M."/>
            <person name="Wallis J.M."/>
            <person name="West A.P."/>
            <person name="White S.S."/>
            <person name="Whitehead S.L."/>
            <person name="Whittaker H."/>
            <person name="Wild A."/>
            <person name="Willey D.J."/>
            <person name="Wilmer T.E."/>
            <person name="Wood J.M."/>
            <person name="Wray P.W."/>
            <person name="Wyatt J.C."/>
            <person name="Young L."/>
            <person name="Younger R.M."/>
            <person name="Bentley D.R."/>
            <person name="Coulson A."/>
            <person name="Durbin R.M."/>
            <person name="Hubbard T."/>
            <person name="Sulston J.E."/>
            <person name="Dunham I."/>
            <person name="Rogers J."/>
            <person name="Beck S."/>
        </authorList>
    </citation>
    <scope>NUCLEOTIDE SEQUENCE [LARGE SCALE GENOMIC DNA]</scope>
</reference>
<reference key="6">
    <citation type="submission" date="2005-09" db="EMBL/GenBank/DDBJ databases">
        <authorList>
            <person name="Mural R.J."/>
            <person name="Istrail S."/>
            <person name="Sutton G.G."/>
            <person name="Florea L."/>
            <person name="Halpern A.L."/>
            <person name="Mobarry C.M."/>
            <person name="Lippert R."/>
            <person name="Walenz B."/>
            <person name="Shatkay H."/>
            <person name="Dew I."/>
            <person name="Miller J.R."/>
            <person name="Flanigan M.J."/>
            <person name="Edwards N.J."/>
            <person name="Bolanos R."/>
            <person name="Fasulo D."/>
            <person name="Halldorsson B.V."/>
            <person name="Hannenhalli S."/>
            <person name="Turner R."/>
            <person name="Yooseph S."/>
            <person name="Lu F."/>
            <person name="Nusskern D.R."/>
            <person name="Shue B.C."/>
            <person name="Zheng X.H."/>
            <person name="Zhong F."/>
            <person name="Delcher A.L."/>
            <person name="Huson D.H."/>
            <person name="Kravitz S.A."/>
            <person name="Mouchard L."/>
            <person name="Reinert K."/>
            <person name="Remington K.A."/>
            <person name="Clark A.G."/>
            <person name="Waterman M.S."/>
            <person name="Eichler E.E."/>
            <person name="Adams M.D."/>
            <person name="Hunkapiller M.W."/>
            <person name="Myers E.W."/>
            <person name="Venter J.C."/>
        </authorList>
    </citation>
    <scope>NUCLEOTIDE SEQUENCE [LARGE SCALE GENOMIC DNA]</scope>
</reference>
<reference key="7">
    <citation type="journal article" date="2004" name="Genome Res.">
        <title>The status, quality, and expansion of the NIH full-length cDNA project: the Mammalian Gene Collection (MGC).</title>
        <authorList>
            <consortium name="The MGC Project Team"/>
        </authorList>
    </citation>
    <scope>NUCLEOTIDE SEQUENCE [LARGE SCALE MRNA]</scope>
    <source>
        <tissue>Eye</tissue>
        <tissue>PNS</tissue>
    </source>
</reference>
<reference key="8">
    <citation type="journal article" date="2013" name="Am. J. Hum. Genet.">
        <title>Mutations in FBXL4 cause mitochondrial encephalopathy and a disorder of mitochondrial DNA maintenance.</title>
        <authorList>
            <person name="Bonnen P.E."/>
            <person name="Yarham J.W."/>
            <person name="Besse A."/>
            <person name="Wu P."/>
            <person name="Faqeih E.A."/>
            <person name="Al-Asmari A.M."/>
            <person name="Saleh M.A."/>
            <person name="Eyaid W."/>
            <person name="Hadeel A."/>
            <person name="He L."/>
            <person name="Smith F."/>
            <person name="Yau S."/>
            <person name="Simcox E.M."/>
            <person name="Miwa S."/>
            <person name="Donti T."/>
            <person name="Abu-Amero K.K."/>
            <person name="Wong L.J."/>
            <person name="Craigen W.J."/>
            <person name="Graham B.H."/>
            <person name="Scott K.L."/>
            <person name="McFarland R."/>
            <person name="Taylor R.W."/>
        </authorList>
    </citation>
    <scope>SUBCELLULAR LOCATION</scope>
    <scope>INVOLVEMENT IN MTDPS13</scope>
</reference>
<reference key="9">
    <citation type="journal article" date="2013" name="Am. J. Hum. Genet.">
        <title>Mutations in FBXL4, encoding a mitochondrial protein, cause early-onset mitochondrial encephalomyopathy.</title>
        <authorList>
            <person name="Gai X."/>
            <person name="Ghezzi D."/>
            <person name="Johnson M.A."/>
            <person name="Biagosch C.A."/>
            <person name="Shamseldin H.E."/>
            <person name="Haack T.B."/>
            <person name="Reyes A."/>
            <person name="Tsukikawa M."/>
            <person name="Sheldon C.A."/>
            <person name="Srinivasan S."/>
            <person name="Gorza M."/>
            <person name="Kremer L.S."/>
            <person name="Wieland T."/>
            <person name="Strom T.M."/>
            <person name="Polyak E."/>
            <person name="Place E."/>
            <person name="Consugar M."/>
            <person name="Ostrovsky J."/>
            <person name="Vidoni S."/>
            <person name="Robinson A.J."/>
            <person name="Wong L.J."/>
            <person name="Sondheimer N."/>
            <person name="Salih M.A."/>
            <person name="Al-Jishi E."/>
            <person name="Raab C.P."/>
            <person name="Bean C."/>
            <person name="Furlan F."/>
            <person name="Parini R."/>
            <person name="Lamperti C."/>
            <person name="Mayr J.A."/>
            <person name="Konstantopoulou V."/>
            <person name="Huemer M."/>
            <person name="Pierce E.A."/>
            <person name="Meitinger T."/>
            <person name="Freisinger P."/>
            <person name="Sperl W."/>
            <person name="Prokisch H."/>
            <person name="Alkuraya F.S."/>
            <person name="Falk M.J."/>
            <person name="Zeviani M."/>
        </authorList>
    </citation>
    <scope>SUBCELLULAR LOCATION</scope>
    <scope>VARIANTS MTDPS13 THR-205; TRP-482; ASN-551; GLY-565; ALA-568 AND PRO-597</scope>
</reference>
<reference key="10">
    <citation type="journal article" date="2016" name="Eur. J. Med. Genet.">
        <title>A novel mutation in FBXL4 in a Norwegian child with encephalomyopathic mitochondrial DNA depletion syndrome 13.</title>
        <authorList>
            <person name="Baroey T."/>
            <person name="Pedurupillay C.R."/>
            <person name="Bliksrud Y.T."/>
            <person name="Rasmussen M."/>
            <person name="Holmgren A."/>
            <person name="Vigeland M.D."/>
            <person name="Hughes T."/>
            <person name="Brink M."/>
            <person name="Rodenburg R."/>
            <person name="Nedregaard B."/>
            <person name="Stroemme P."/>
            <person name="Frengen E."/>
            <person name="Misceo D."/>
        </authorList>
    </citation>
    <scope>VARIANT MTDPS13 PRO-481</scope>
</reference>
<reference key="11">
    <citation type="journal article" date="2023" name="EMBO J.">
        <title>A mitochondrial SCF-FBXL4 ubiquitin E3 ligase complex degrades BNIP3 and NIX to restrain mitophagy and prevent mitochondrial disease.</title>
        <authorList>
            <person name="Cao Y."/>
            <person name="Zheng J."/>
            <person name="Wan H."/>
            <person name="Sun Y."/>
            <person name="Fu S."/>
            <person name="Liu S."/>
            <person name="He B."/>
            <person name="Cai G."/>
            <person name="Cao Y."/>
            <person name="Huang H."/>
            <person name="Li Q."/>
            <person name="Ma Y."/>
            <person name="Chen S."/>
            <person name="Wang F."/>
            <person name="Jiang H."/>
        </authorList>
    </citation>
    <scope>FUNCTION</scope>
    <scope>SUBCELLULAR LOCATION</scope>
    <scope>INTERACTION WITH SKP1 AND VCP</scope>
</reference>
<reference key="12">
    <citation type="journal article" date="2024" name="EMBO Rep.">
        <title>PPTC7 antagonizes mitophagy by promoting BNIP3 and NIX degradation via SCFFBXL4.</title>
        <authorList>
            <person name="Nguyen-Dien G.T."/>
            <person name="Townsend B."/>
            <person name="Kulkarni P.G."/>
            <person name="Kozul K.L."/>
            <person name="Ooi S.S."/>
            <person name="Eldershaw D.N."/>
            <person name="Weeratunga S."/>
            <person name="Liu M."/>
            <person name="Jones M.J."/>
            <person name="Millard S.S."/>
            <person name="Ng D.C."/>
            <person name="Pagano M."/>
            <person name="Bonfim-Melo A."/>
            <person name="Schneider T."/>
            <person name="Komander D."/>
            <person name="Lazarou M."/>
            <person name="Collins B.M."/>
            <person name="Pagan J.K."/>
        </authorList>
    </citation>
    <scope>FUNCTION</scope>
    <scope>INTERACTION WITH PPTC7</scope>
</reference>
<accession>Q9UKA2</accession>
<accession>B2R7Q5</accession>
<accession>E1P530</accession>
<accession>O95919</accession>
<accession>Q5BJH0</accession>
<accession>Q9UJU0</accession>
<keyword id="KW-0963">Cytoplasm</keyword>
<keyword id="KW-0225">Disease variant</keyword>
<keyword id="KW-0433">Leucine-rich repeat</keyword>
<keyword id="KW-0472">Membrane</keyword>
<keyword id="KW-0488">Methylation</keyword>
<keyword id="KW-0496">Mitochondrion</keyword>
<keyword id="KW-1000">Mitochondrion outer membrane</keyword>
<keyword id="KW-0539">Nucleus</keyword>
<keyword id="KW-1274">Primary mitochondrial disease</keyword>
<keyword id="KW-1267">Proteomics identification</keyword>
<keyword id="KW-1185">Reference proteome</keyword>
<keyword id="KW-0677">Repeat</keyword>
<keyword id="KW-0833">Ubl conjugation pathway</keyword>
<protein>
    <recommendedName>
        <fullName>F-box/LRR-repeat protein 4</fullName>
    </recommendedName>
    <alternativeName>
        <fullName>F-box and leucine-rich repeat protein 4</fullName>
    </alternativeName>
    <alternativeName>
        <fullName>F-box protein FBL4/FBL5</fullName>
    </alternativeName>
</protein>
<comment type="function">
    <text evidence="1 7 8">Substrate-recognition component of the mitochondria-localized SCF-FBXL4 ubiquitin E3 ligase complex that plays a role in the restriction of mitophagy by controlling the degradation of BNIP3 and NIX mitophagy receptors (PubMed:36896912, PubMed:38992176). Rescues also mitochondrial injury through reverting hyperactivation of DRP1-mediated mitochondrial fission (By similarity).</text>
</comment>
<comment type="subunit">
    <text evidence="7 8">Part of a SCF (SKP1-CUL1-F-box) protein ligase complex (PubMed:36896912). Interacts with VCP (PubMed:36896912). Interacts with PPTC7; this interaction promotes destruction of BNIP3 and NIX and mitophagy suppression (PubMed:38992176).</text>
</comment>
<comment type="interaction">
    <interactant intactId="EBI-2869903">
        <id>Q9UKA2</id>
    </interactant>
    <interactant intactId="EBI-10968534">
        <id>P50570-2</id>
        <label>DNM2</label>
    </interactant>
    <organismsDiffer>false</organismsDiffer>
    <experiments>3</experiments>
</comment>
<comment type="interaction">
    <interactant intactId="EBI-2869903">
        <id>Q9UKA2</id>
    </interactant>
    <interactant intactId="EBI-2800203">
        <id>O14773</id>
        <label>TPP1</label>
    </interactant>
    <organismsDiffer>false</organismsDiffer>
    <experiments>3</experiments>
</comment>
<comment type="subcellular location">
    <subcellularLocation>
        <location>Cytoplasm</location>
    </subcellularLocation>
    <subcellularLocation>
        <location>Nucleus</location>
    </subcellularLocation>
    <subcellularLocation>
        <location evidence="7">Mitochondrion outer membrane</location>
    </subcellularLocation>
</comment>
<comment type="tissue specificity">
    <text evidence="3">Expressed in heart, kidney, liver, lung, pancreas, and placenta, but not in skeletal muscle.</text>
</comment>
<comment type="disease" evidence="4 5 6">
    <disease id="DI-03915">
        <name>Mitochondrial DNA depletion syndrome 13</name>
        <acronym>MTDPS13</acronym>
        <description>An autosomal recessive disorder characterized by early infantile onset of encephalopathy, hypotonia, lactic acidosis, and severe global developmental delay. Cells derived from patient tissues show defects in mitochondrial oxidative phosphorylation and decreased mtDNA content.</description>
        <dbReference type="MIM" id="615471"/>
    </disease>
    <text>The disease is caused by variants affecting the gene represented in this entry.</text>
</comment>
<proteinExistence type="evidence at protein level"/>
<gene>
    <name type="primary">FBXL4</name>
    <name type="synonym">FBL4</name>
    <name type="synonym">FBL5</name>
</gene>
<dbReference type="EMBL" id="AF176699">
    <property type="protein sequence ID" value="AAF03699.1"/>
    <property type="molecule type" value="mRNA"/>
</dbReference>
<dbReference type="EMBL" id="AF174590">
    <property type="protein sequence ID" value="AAF04511.1"/>
    <property type="molecule type" value="mRNA"/>
</dbReference>
<dbReference type="EMBL" id="AF199355">
    <property type="protein sequence ID" value="AAF09247.1"/>
    <property type="molecule type" value="mRNA"/>
</dbReference>
<dbReference type="EMBL" id="AK313076">
    <property type="protein sequence ID" value="BAG35902.1"/>
    <property type="molecule type" value="mRNA"/>
</dbReference>
<dbReference type="EMBL" id="AL022395">
    <property type="status" value="NOT_ANNOTATED_CDS"/>
    <property type="molecule type" value="Genomic_DNA"/>
</dbReference>
<dbReference type="EMBL" id="CH471051">
    <property type="protein sequence ID" value="EAW48489.1"/>
    <property type="molecule type" value="Genomic_DNA"/>
</dbReference>
<dbReference type="EMBL" id="CH471051">
    <property type="protein sequence ID" value="EAW48490.1"/>
    <property type="molecule type" value="Genomic_DNA"/>
</dbReference>
<dbReference type="EMBL" id="BC055010">
    <property type="protein sequence ID" value="AAH55010.1"/>
    <property type="molecule type" value="mRNA"/>
</dbReference>
<dbReference type="EMBL" id="BC091484">
    <property type="protein sequence ID" value="AAH91484.1"/>
    <property type="molecule type" value="mRNA"/>
</dbReference>
<dbReference type="CCDS" id="CCDS5041.1"/>
<dbReference type="RefSeq" id="NP_001265645.1">
    <property type="nucleotide sequence ID" value="NM_001278716.2"/>
</dbReference>
<dbReference type="RefSeq" id="NP_036292.2">
    <property type="nucleotide sequence ID" value="NM_012160.4"/>
</dbReference>
<dbReference type="RefSeq" id="XP_016866215.1">
    <property type="nucleotide sequence ID" value="XM_017010726.2"/>
</dbReference>
<dbReference type="RefSeq" id="XP_047274581.1">
    <property type="nucleotide sequence ID" value="XM_047418625.1"/>
</dbReference>
<dbReference type="RefSeq" id="XP_054211110.1">
    <property type="nucleotide sequence ID" value="XM_054355135.1"/>
</dbReference>
<dbReference type="RefSeq" id="XP_054211111.1">
    <property type="nucleotide sequence ID" value="XM_054355136.1"/>
</dbReference>
<dbReference type="SMR" id="Q9UKA2"/>
<dbReference type="BioGRID" id="117626">
    <property type="interactions" value="110"/>
</dbReference>
<dbReference type="ComplexPortal" id="CPX-2512">
    <property type="entry name" value="SCF E3 ubiquitin ligase complex, FBXL4 variant"/>
</dbReference>
<dbReference type="FunCoup" id="Q9UKA2">
    <property type="interactions" value="752"/>
</dbReference>
<dbReference type="IntAct" id="Q9UKA2">
    <property type="interactions" value="42"/>
</dbReference>
<dbReference type="STRING" id="9606.ENSP00000358247"/>
<dbReference type="GlyGen" id="Q9UKA2">
    <property type="glycosylation" value="3 sites, 1 N-linked glycan (2 sites), 1 O-linked glycan (1 site)"/>
</dbReference>
<dbReference type="iPTMnet" id="Q9UKA2"/>
<dbReference type="PhosphoSitePlus" id="Q9UKA2"/>
<dbReference type="SwissPalm" id="Q9UKA2"/>
<dbReference type="BioMuta" id="FBXL4"/>
<dbReference type="DMDM" id="21263631"/>
<dbReference type="jPOST" id="Q9UKA2"/>
<dbReference type="MassIVE" id="Q9UKA2"/>
<dbReference type="PaxDb" id="9606-ENSP00000358247"/>
<dbReference type="PeptideAtlas" id="Q9UKA2"/>
<dbReference type="ProteomicsDB" id="84750"/>
<dbReference type="Pumba" id="Q9UKA2"/>
<dbReference type="Antibodypedia" id="18894">
    <property type="antibodies" value="105 antibodies from 19 providers"/>
</dbReference>
<dbReference type="DNASU" id="26235"/>
<dbReference type="Ensembl" id="ENST00000229971.2">
    <property type="protein sequence ID" value="ENSP00000229971.1"/>
    <property type="gene ID" value="ENSG00000112234.9"/>
</dbReference>
<dbReference type="Ensembl" id="ENST00000369244.7">
    <property type="protein sequence ID" value="ENSP00000358247.1"/>
    <property type="gene ID" value="ENSG00000112234.9"/>
</dbReference>
<dbReference type="GeneID" id="26235"/>
<dbReference type="KEGG" id="hsa:26235"/>
<dbReference type="MANE-Select" id="ENST00000369244.7">
    <property type="protein sequence ID" value="ENSP00000358247.1"/>
    <property type="RefSeq nucleotide sequence ID" value="NM_001278716.2"/>
    <property type="RefSeq protein sequence ID" value="NP_001265645.1"/>
</dbReference>
<dbReference type="UCSC" id="uc003ppf.2">
    <property type="organism name" value="human"/>
</dbReference>
<dbReference type="AGR" id="HGNC:13601"/>
<dbReference type="CTD" id="26235"/>
<dbReference type="DisGeNET" id="26235"/>
<dbReference type="GeneCards" id="FBXL4"/>
<dbReference type="GeneReviews" id="FBXL4"/>
<dbReference type="HGNC" id="HGNC:13601">
    <property type="gene designation" value="FBXL4"/>
</dbReference>
<dbReference type="HPA" id="ENSG00000112234">
    <property type="expression patterns" value="Low tissue specificity"/>
</dbReference>
<dbReference type="MalaCards" id="FBXL4"/>
<dbReference type="MIM" id="605654">
    <property type="type" value="gene"/>
</dbReference>
<dbReference type="MIM" id="615471">
    <property type="type" value="phenotype"/>
</dbReference>
<dbReference type="neXtProt" id="NX_Q9UKA2"/>
<dbReference type="OpenTargets" id="ENSG00000112234"/>
<dbReference type="Orphanet" id="369897">
    <property type="disease" value="Mitochondrial DNA depletion syndrome, encephalomyopathic form with variable craniofacial anomalies"/>
</dbReference>
<dbReference type="PharmGKB" id="PA28024"/>
<dbReference type="VEuPathDB" id="HostDB:ENSG00000112234"/>
<dbReference type="eggNOG" id="KOG1947">
    <property type="taxonomic scope" value="Eukaryota"/>
</dbReference>
<dbReference type="GeneTree" id="ENSGT00940000155184"/>
<dbReference type="HOGENOM" id="CLU_024764_2_0_1"/>
<dbReference type="InParanoid" id="Q9UKA2"/>
<dbReference type="OMA" id="GWCMREA"/>
<dbReference type="OrthoDB" id="2153609at2759"/>
<dbReference type="PAN-GO" id="Q9UKA2">
    <property type="GO annotations" value="2 GO annotations based on evolutionary models"/>
</dbReference>
<dbReference type="PhylomeDB" id="Q9UKA2"/>
<dbReference type="TreeFam" id="TF323721"/>
<dbReference type="PathwayCommons" id="Q9UKA2"/>
<dbReference type="Reactome" id="R-HSA-8951664">
    <property type="pathway name" value="Neddylation"/>
</dbReference>
<dbReference type="Reactome" id="R-HSA-983168">
    <property type="pathway name" value="Antigen processing: Ubiquitination &amp; Proteasome degradation"/>
</dbReference>
<dbReference type="SignaLink" id="Q9UKA2"/>
<dbReference type="BioGRID-ORCS" id="26235">
    <property type="hits" value="6 hits in 1196 CRISPR screens"/>
</dbReference>
<dbReference type="ChiTaRS" id="FBXL4">
    <property type="organism name" value="human"/>
</dbReference>
<dbReference type="GenomeRNAi" id="26235"/>
<dbReference type="Pharos" id="Q9UKA2">
    <property type="development level" value="Tbio"/>
</dbReference>
<dbReference type="PRO" id="PR:Q9UKA2"/>
<dbReference type="Proteomes" id="UP000005640">
    <property type="component" value="Chromosome 6"/>
</dbReference>
<dbReference type="RNAct" id="Q9UKA2">
    <property type="molecule type" value="protein"/>
</dbReference>
<dbReference type="Bgee" id="ENSG00000112234">
    <property type="expression patterns" value="Expressed in adrenal tissue and 181 other cell types or tissues"/>
</dbReference>
<dbReference type="GO" id="GO:0005829">
    <property type="term" value="C:cytosol"/>
    <property type="evidence" value="ECO:0000304"/>
    <property type="project" value="Reactome"/>
</dbReference>
<dbReference type="GO" id="GO:0005758">
    <property type="term" value="C:mitochondrial intermembrane space"/>
    <property type="evidence" value="ECO:0000314"/>
    <property type="project" value="UniProtKB"/>
</dbReference>
<dbReference type="GO" id="GO:0005741">
    <property type="term" value="C:mitochondrial outer membrane"/>
    <property type="evidence" value="ECO:0000314"/>
    <property type="project" value="FlyBase"/>
</dbReference>
<dbReference type="GO" id="GO:0005739">
    <property type="term" value="C:mitochondrion"/>
    <property type="evidence" value="ECO:0006056"/>
    <property type="project" value="FlyBase"/>
</dbReference>
<dbReference type="GO" id="GO:0016607">
    <property type="term" value="C:nuclear speck"/>
    <property type="evidence" value="ECO:0000314"/>
    <property type="project" value="HPA"/>
</dbReference>
<dbReference type="GO" id="GO:0019005">
    <property type="term" value="C:SCF ubiquitin ligase complex"/>
    <property type="evidence" value="ECO:0000318"/>
    <property type="project" value="GO_Central"/>
</dbReference>
<dbReference type="GO" id="GO:0000151">
    <property type="term" value="C:ubiquitin ligase complex"/>
    <property type="evidence" value="ECO:0000304"/>
    <property type="project" value="ProtInc"/>
</dbReference>
<dbReference type="GO" id="GO:1990756">
    <property type="term" value="F:ubiquitin-like ligase-substrate adaptor activity"/>
    <property type="evidence" value="ECO:0000314"/>
    <property type="project" value="UniProt"/>
</dbReference>
<dbReference type="GO" id="GO:0000422">
    <property type="term" value="P:autophagy of mitochondrion"/>
    <property type="evidence" value="ECO:0000315"/>
    <property type="project" value="MGI"/>
</dbReference>
<dbReference type="GO" id="GO:1901525">
    <property type="term" value="P:negative regulation of mitophagy"/>
    <property type="evidence" value="ECO:0000314"/>
    <property type="project" value="UniProt"/>
</dbReference>
<dbReference type="GO" id="GO:0031146">
    <property type="term" value="P:SCF-dependent proteasomal ubiquitin-dependent protein catabolic process"/>
    <property type="evidence" value="ECO:0000318"/>
    <property type="project" value="GO_Central"/>
</dbReference>
<dbReference type="GO" id="GO:0006511">
    <property type="term" value="P:ubiquitin-dependent protein catabolic process"/>
    <property type="evidence" value="ECO:0000304"/>
    <property type="project" value="ProtInc"/>
</dbReference>
<dbReference type="CDD" id="cd22117">
    <property type="entry name" value="F-box_FBXL4"/>
    <property type="match status" value="1"/>
</dbReference>
<dbReference type="FunFam" id="1.20.1280.50:FF:000050">
    <property type="entry name" value="F-box and leucine-rich repeat protein 4"/>
    <property type="match status" value="1"/>
</dbReference>
<dbReference type="FunFam" id="3.80.10.10:FF:000152">
    <property type="entry name" value="F-box/LRR-repeat protein 4 isoform X1"/>
    <property type="match status" value="1"/>
</dbReference>
<dbReference type="FunFam" id="3.80.10.10:FF:000417">
    <property type="entry name" value="F-box/LRR-repeat protein 4 isoform X1"/>
    <property type="match status" value="1"/>
</dbReference>
<dbReference type="Gene3D" id="3.80.10.10">
    <property type="entry name" value="Ribonuclease Inhibitor"/>
    <property type="match status" value="2"/>
</dbReference>
<dbReference type="InterPro" id="IPR036047">
    <property type="entry name" value="F-box-like_dom_sf"/>
</dbReference>
<dbReference type="InterPro" id="IPR001810">
    <property type="entry name" value="F-box_dom"/>
</dbReference>
<dbReference type="InterPro" id="IPR006553">
    <property type="entry name" value="Leu-rich_rpt_Cys-con_subtyp"/>
</dbReference>
<dbReference type="InterPro" id="IPR032675">
    <property type="entry name" value="LRR_dom_sf"/>
</dbReference>
<dbReference type="PANTHER" id="PTHR13318:SF152">
    <property type="entry name" value="F-BOX_LRR-REPEAT PROTEIN 4"/>
    <property type="match status" value="1"/>
</dbReference>
<dbReference type="PANTHER" id="PTHR13318">
    <property type="entry name" value="PARTNER OF PAIRED, ISOFORM B-RELATED"/>
    <property type="match status" value="1"/>
</dbReference>
<dbReference type="Pfam" id="PF12937">
    <property type="entry name" value="F-box-like"/>
    <property type="match status" value="1"/>
</dbReference>
<dbReference type="SMART" id="SM00367">
    <property type="entry name" value="LRR_CC"/>
    <property type="match status" value="7"/>
</dbReference>
<dbReference type="SUPFAM" id="SSF81383">
    <property type="entry name" value="F-box domain"/>
    <property type="match status" value="1"/>
</dbReference>
<dbReference type="SUPFAM" id="SSF52047">
    <property type="entry name" value="RNI-like"/>
    <property type="match status" value="1"/>
</dbReference>
<dbReference type="PROSITE" id="PS50181">
    <property type="entry name" value="FBOX"/>
    <property type="match status" value="1"/>
</dbReference>
<evidence type="ECO:0000250" key="1">
    <source>
        <dbReference type="UniProtKB" id="Q8BH70"/>
    </source>
</evidence>
<evidence type="ECO:0000255" key="2">
    <source>
        <dbReference type="PROSITE-ProRule" id="PRU00080"/>
    </source>
</evidence>
<evidence type="ECO:0000269" key="3">
    <source>
    </source>
</evidence>
<evidence type="ECO:0000269" key="4">
    <source>
    </source>
</evidence>
<evidence type="ECO:0000269" key="5">
    <source>
    </source>
</evidence>
<evidence type="ECO:0000269" key="6">
    <source>
    </source>
</evidence>
<evidence type="ECO:0000269" key="7">
    <source>
    </source>
</evidence>
<evidence type="ECO:0000269" key="8">
    <source>
    </source>
</evidence>
<evidence type="ECO:0000305" key="9"/>